<reference key="1">
    <citation type="journal article" date="1994" name="Yeast">
        <title>Analysis of a 70 kb region on the right arm of yeast chromosome II.</title>
        <authorList>
            <person name="Mannhaupt G."/>
            <person name="Stucka R."/>
            <person name="Ehnle S."/>
            <person name="Vetter I."/>
            <person name="Feldmann H."/>
        </authorList>
    </citation>
    <scope>NUCLEOTIDE SEQUENCE [GENOMIC DNA]</scope>
    <source>
        <strain>ATCC 204508 / S288c</strain>
    </source>
</reference>
<reference key="2">
    <citation type="journal article" date="1994" name="EMBO J.">
        <title>Complete DNA sequence of yeast chromosome II.</title>
        <authorList>
            <person name="Feldmann H."/>
            <person name="Aigle M."/>
            <person name="Aljinovic G."/>
            <person name="Andre B."/>
            <person name="Baclet M.C."/>
            <person name="Barthe C."/>
            <person name="Baur A."/>
            <person name="Becam A.-M."/>
            <person name="Biteau N."/>
            <person name="Boles E."/>
            <person name="Brandt T."/>
            <person name="Brendel M."/>
            <person name="Brueckner M."/>
            <person name="Bussereau F."/>
            <person name="Christiansen C."/>
            <person name="Contreras R."/>
            <person name="Crouzet M."/>
            <person name="Cziepluch C."/>
            <person name="Demolis N."/>
            <person name="Delaveau T."/>
            <person name="Doignon F."/>
            <person name="Domdey H."/>
            <person name="Duesterhus S."/>
            <person name="Dubois E."/>
            <person name="Dujon B."/>
            <person name="El Bakkoury M."/>
            <person name="Entian K.-D."/>
            <person name="Feuermann M."/>
            <person name="Fiers W."/>
            <person name="Fobo G.M."/>
            <person name="Fritz C."/>
            <person name="Gassenhuber J."/>
            <person name="Glansdorff N."/>
            <person name="Goffeau A."/>
            <person name="Grivell L.A."/>
            <person name="de Haan M."/>
            <person name="Hein C."/>
            <person name="Herbert C.J."/>
            <person name="Hollenberg C.P."/>
            <person name="Holmstroem K."/>
            <person name="Jacq C."/>
            <person name="Jacquet M."/>
            <person name="Jauniaux J.-C."/>
            <person name="Jonniaux J.-L."/>
            <person name="Kallesoee T."/>
            <person name="Kiesau P."/>
            <person name="Kirchrath L."/>
            <person name="Koetter P."/>
            <person name="Korol S."/>
            <person name="Liebl S."/>
            <person name="Logghe M."/>
            <person name="Lohan A.J.E."/>
            <person name="Louis E.J."/>
            <person name="Li Z.Y."/>
            <person name="Maat M.J."/>
            <person name="Mallet L."/>
            <person name="Mannhaupt G."/>
            <person name="Messenguy F."/>
            <person name="Miosga T."/>
            <person name="Molemans F."/>
            <person name="Mueller S."/>
            <person name="Nasr F."/>
            <person name="Obermaier B."/>
            <person name="Perea J."/>
            <person name="Pierard A."/>
            <person name="Piravandi E."/>
            <person name="Pohl F.M."/>
            <person name="Pohl T.M."/>
            <person name="Potier S."/>
            <person name="Proft M."/>
            <person name="Purnelle B."/>
            <person name="Ramezani Rad M."/>
            <person name="Rieger M."/>
            <person name="Rose M."/>
            <person name="Schaaff-Gerstenschlaeger I."/>
            <person name="Scherens B."/>
            <person name="Schwarzlose C."/>
            <person name="Skala J."/>
            <person name="Slonimski P.P."/>
            <person name="Smits P.H.M."/>
            <person name="Souciet J.-L."/>
            <person name="Steensma H.Y."/>
            <person name="Stucka R."/>
            <person name="Urrestarazu L.A."/>
            <person name="van der Aart Q.J.M."/>
            <person name="Van Dyck L."/>
            <person name="Vassarotti A."/>
            <person name="Vetter I."/>
            <person name="Vierendeels F."/>
            <person name="Vissers S."/>
            <person name="Wagner G."/>
            <person name="de Wergifosse P."/>
            <person name="Wolfe K.H."/>
            <person name="Zagulski M."/>
            <person name="Zimmermann F.K."/>
            <person name="Mewes H.-W."/>
            <person name="Kleine K."/>
        </authorList>
    </citation>
    <scope>NUCLEOTIDE SEQUENCE [LARGE SCALE GENOMIC DNA]</scope>
    <source>
        <strain>ATCC 204508 / S288c</strain>
    </source>
</reference>
<reference key="3">
    <citation type="journal article" date="2014" name="G3 (Bethesda)">
        <title>The reference genome sequence of Saccharomyces cerevisiae: Then and now.</title>
        <authorList>
            <person name="Engel S.R."/>
            <person name="Dietrich F.S."/>
            <person name="Fisk D.G."/>
            <person name="Binkley G."/>
            <person name="Balakrishnan R."/>
            <person name="Costanzo M.C."/>
            <person name="Dwight S.S."/>
            <person name="Hitz B.C."/>
            <person name="Karra K."/>
            <person name="Nash R.S."/>
            <person name="Weng S."/>
            <person name="Wong E.D."/>
            <person name="Lloyd P."/>
            <person name="Skrzypek M.S."/>
            <person name="Miyasato S.R."/>
            <person name="Simison M."/>
            <person name="Cherry J.M."/>
        </authorList>
    </citation>
    <scope>GENOME REANNOTATION</scope>
    <source>
        <strain>ATCC 204508 / S288c</strain>
    </source>
</reference>
<reference key="4">
    <citation type="journal article" date="2007" name="Genome Res.">
        <title>Approaching a complete repository of sequence-verified protein-encoding clones for Saccharomyces cerevisiae.</title>
        <authorList>
            <person name="Hu Y."/>
            <person name="Rolfs A."/>
            <person name="Bhullar B."/>
            <person name="Murthy T.V.S."/>
            <person name="Zhu C."/>
            <person name="Berger M.F."/>
            <person name="Camargo A.A."/>
            <person name="Kelley F."/>
            <person name="McCarron S."/>
            <person name="Jepson D."/>
            <person name="Richardson A."/>
            <person name="Raphael J."/>
            <person name="Moreira D."/>
            <person name="Taycher E."/>
            <person name="Zuo D."/>
            <person name="Mohr S."/>
            <person name="Kane M.F."/>
            <person name="Williamson J."/>
            <person name="Simpson A.J.G."/>
            <person name="Bulyk M.L."/>
            <person name="Harlow E."/>
            <person name="Marsischky G."/>
            <person name="Kolodner R.D."/>
            <person name="LaBaer J."/>
        </authorList>
    </citation>
    <scope>NUCLEOTIDE SEQUENCE [GENOMIC DNA]</scope>
    <source>
        <strain>ATCC 204508 / S288c</strain>
    </source>
</reference>
<reference key="5">
    <citation type="journal article" date="2003" name="Nature">
        <title>Global analysis of protein expression in yeast.</title>
        <authorList>
            <person name="Ghaemmaghami S."/>
            <person name="Huh W.-K."/>
            <person name="Bower K."/>
            <person name="Howson R.W."/>
            <person name="Belle A."/>
            <person name="Dephoure N."/>
            <person name="O'Shea E.K."/>
            <person name="Weissman J.S."/>
        </authorList>
    </citation>
    <scope>LEVEL OF PROTEIN EXPRESSION [LARGE SCALE ANALYSIS]</scope>
</reference>
<gene>
    <name type="ordered locus">YBR096W</name>
    <name type="ORF">YBR0824</name>
</gene>
<comment type="miscellaneous">
    <text evidence="2">Present with 1950 molecules/cell in log phase SD medium.</text>
</comment>
<comment type="similarity">
    <text evidence="3">Belongs to the lcsJ thioesterase family.</text>
</comment>
<organism>
    <name type="scientific">Saccharomyces cerevisiae (strain ATCC 204508 / S288c)</name>
    <name type="common">Baker's yeast</name>
    <dbReference type="NCBI Taxonomy" id="559292"/>
    <lineage>
        <taxon>Eukaryota</taxon>
        <taxon>Fungi</taxon>
        <taxon>Dikarya</taxon>
        <taxon>Ascomycota</taxon>
        <taxon>Saccharomycotina</taxon>
        <taxon>Saccharomycetes</taxon>
        <taxon>Saccharomycetales</taxon>
        <taxon>Saccharomycetaceae</taxon>
        <taxon>Saccharomyces</taxon>
    </lineage>
</organism>
<dbReference type="EC" id="2.3.1.-" evidence="1"/>
<dbReference type="EMBL" id="X78993">
    <property type="protein sequence ID" value="CAA55601.1"/>
    <property type="molecule type" value="Genomic_DNA"/>
</dbReference>
<dbReference type="EMBL" id="Z35965">
    <property type="protein sequence ID" value="CAA85049.1"/>
    <property type="molecule type" value="Genomic_DNA"/>
</dbReference>
<dbReference type="EMBL" id="AY558181">
    <property type="protein sequence ID" value="AAS56507.1"/>
    <property type="molecule type" value="Genomic_DNA"/>
</dbReference>
<dbReference type="EMBL" id="BK006936">
    <property type="protein sequence ID" value="DAA07217.1"/>
    <property type="molecule type" value="Genomic_DNA"/>
</dbReference>
<dbReference type="PIR" id="S48263">
    <property type="entry name" value="S48263"/>
</dbReference>
<dbReference type="RefSeq" id="NP_009654.3">
    <property type="nucleotide sequence ID" value="NM_001178444.3"/>
</dbReference>
<dbReference type="SMR" id="P38256"/>
<dbReference type="BioGRID" id="32802">
    <property type="interactions" value="62"/>
</dbReference>
<dbReference type="DIP" id="DIP-5643N"/>
<dbReference type="FunCoup" id="P38256">
    <property type="interactions" value="52"/>
</dbReference>
<dbReference type="IntAct" id="P38256">
    <property type="interactions" value="8"/>
</dbReference>
<dbReference type="STRING" id="4932.YBR096W"/>
<dbReference type="iPTMnet" id="P38256"/>
<dbReference type="PaxDb" id="4932-YBR096W"/>
<dbReference type="PeptideAtlas" id="P38256"/>
<dbReference type="EnsemblFungi" id="YBR096W_mRNA">
    <property type="protein sequence ID" value="YBR096W"/>
    <property type="gene ID" value="YBR096W"/>
</dbReference>
<dbReference type="GeneID" id="852393"/>
<dbReference type="KEGG" id="sce:YBR096W"/>
<dbReference type="AGR" id="SGD:S000000300"/>
<dbReference type="SGD" id="S000000300">
    <property type="gene designation" value="YBR096W"/>
</dbReference>
<dbReference type="VEuPathDB" id="FungiDB:YBR096W"/>
<dbReference type="eggNOG" id="KOG4366">
    <property type="taxonomic scope" value="Eukaryota"/>
</dbReference>
<dbReference type="GeneTree" id="ENSGT00390000004859"/>
<dbReference type="HOGENOM" id="CLU_040660_3_0_1"/>
<dbReference type="InParanoid" id="P38256"/>
<dbReference type="OMA" id="FECDFYL"/>
<dbReference type="OrthoDB" id="265761at2759"/>
<dbReference type="BioCyc" id="YEAST:G3O-29060-MONOMER"/>
<dbReference type="BioGRID-ORCS" id="852393">
    <property type="hits" value="0 hits in 10 CRISPR screens"/>
</dbReference>
<dbReference type="PRO" id="PR:P38256"/>
<dbReference type="Proteomes" id="UP000002311">
    <property type="component" value="Chromosome II"/>
</dbReference>
<dbReference type="RNAct" id="P38256">
    <property type="molecule type" value="protein"/>
</dbReference>
<dbReference type="GO" id="GO:0005783">
    <property type="term" value="C:endoplasmic reticulum"/>
    <property type="evidence" value="ECO:0007005"/>
    <property type="project" value="SGD"/>
</dbReference>
<dbReference type="GO" id="GO:0016740">
    <property type="term" value="F:transferase activity"/>
    <property type="evidence" value="ECO:0007669"/>
    <property type="project" value="UniProtKB-KW"/>
</dbReference>
<dbReference type="CDD" id="cd00586">
    <property type="entry name" value="4HBT"/>
    <property type="match status" value="1"/>
</dbReference>
<dbReference type="Gene3D" id="3.10.129.10">
    <property type="entry name" value="Hotdog Thioesterase"/>
    <property type="match status" value="1"/>
</dbReference>
<dbReference type="InterPro" id="IPR029069">
    <property type="entry name" value="HotDog_dom_sf"/>
</dbReference>
<dbReference type="InterPro" id="IPR051490">
    <property type="entry name" value="THEM6_lcsJ_thioesterase"/>
</dbReference>
<dbReference type="PANTHER" id="PTHR12475">
    <property type="match status" value="1"/>
</dbReference>
<dbReference type="PANTHER" id="PTHR12475:SF4">
    <property type="entry name" value="PROTEIN THEM6"/>
    <property type="match status" value="1"/>
</dbReference>
<dbReference type="Pfam" id="PF13279">
    <property type="entry name" value="4HBT_2"/>
    <property type="match status" value="1"/>
</dbReference>
<dbReference type="SUPFAM" id="SSF54637">
    <property type="entry name" value="Thioesterase/thiol ester dehydrase-isomerase"/>
    <property type="match status" value="1"/>
</dbReference>
<keyword id="KW-1185">Reference proteome</keyword>
<keyword id="KW-0808">Transferase</keyword>
<proteinExistence type="evidence at protein level"/>
<evidence type="ECO:0000250" key="1">
    <source>
        <dbReference type="UniProtKB" id="A0A179H0I3"/>
    </source>
</evidence>
<evidence type="ECO:0000269" key="2">
    <source>
    </source>
</evidence>
<evidence type="ECO:0000305" key="3"/>
<sequence length="230" mass="27092">MGVCTIFRWLFAAYLLSSYKSLPGAYFVRFYYYVIQNLFLPMFTGFETENIKKLEKNEYGCFSYTSLDTYASPFECDFYFHKSNSTYFAELDISRGNLMCKIFQKLMLNSKHYPYIPVANVFTNFLKEIKPFQKYSVSSRIICWDEKWIYVMSRFTIKKGTVLCSLSLTKYVLKDGRKTIKPKDALEYCGLYNEKVAKISEDNLKLLTERCGFHETVPLENLSQEYCSEI</sequence>
<accession>P38256</accession>
<accession>D6VQ97</accession>
<protein>
    <recommendedName>
        <fullName evidence="1">Probable thioesterase YBR096W</fullName>
        <ecNumber evidence="1">2.3.1.-</ecNumber>
    </recommendedName>
</protein>
<name>YBU6_YEAST</name>
<feature type="chain" id="PRO_0000202483" description="Probable thioesterase YBR096W">
    <location>
        <begin position="1"/>
        <end position="230"/>
    </location>
</feature>